<accession>Q8FWX2</accession>
<accession>G0KC62</accession>
<name>MINC_BRUSU</name>
<reference key="1">
    <citation type="journal article" date="2002" name="Proc. Natl. Acad. Sci. U.S.A.">
        <title>The Brucella suis genome reveals fundamental similarities between animal and plant pathogens and symbionts.</title>
        <authorList>
            <person name="Paulsen I.T."/>
            <person name="Seshadri R."/>
            <person name="Nelson K.E."/>
            <person name="Eisen J.A."/>
            <person name="Heidelberg J.F."/>
            <person name="Read T.D."/>
            <person name="Dodson R.J."/>
            <person name="Umayam L.A."/>
            <person name="Brinkac L.M."/>
            <person name="Beanan M.J."/>
            <person name="Daugherty S.C."/>
            <person name="DeBoy R.T."/>
            <person name="Durkin A.S."/>
            <person name="Kolonay J.F."/>
            <person name="Madupu R."/>
            <person name="Nelson W.C."/>
            <person name="Ayodeji B."/>
            <person name="Kraul M."/>
            <person name="Shetty J."/>
            <person name="Malek J.A."/>
            <person name="Van Aken S.E."/>
            <person name="Riedmuller S."/>
            <person name="Tettelin H."/>
            <person name="Gill S.R."/>
            <person name="White O."/>
            <person name="Salzberg S.L."/>
            <person name="Hoover D.L."/>
            <person name="Lindler L.E."/>
            <person name="Halling S.M."/>
            <person name="Boyle S.M."/>
            <person name="Fraser C.M."/>
        </authorList>
    </citation>
    <scope>NUCLEOTIDE SEQUENCE [LARGE SCALE GENOMIC DNA]</scope>
    <source>
        <strain>1330</strain>
    </source>
</reference>
<reference key="2">
    <citation type="journal article" date="2011" name="J. Bacteriol.">
        <title>Revised genome sequence of Brucella suis 1330.</title>
        <authorList>
            <person name="Tae H."/>
            <person name="Shallom S."/>
            <person name="Settlage R."/>
            <person name="Preston D."/>
            <person name="Adams L.G."/>
            <person name="Garner H.R."/>
        </authorList>
    </citation>
    <scope>NUCLEOTIDE SEQUENCE [LARGE SCALE GENOMIC DNA]</scope>
    <source>
        <strain>1330</strain>
    </source>
</reference>
<evidence type="ECO:0000255" key="1">
    <source>
        <dbReference type="HAMAP-Rule" id="MF_00267"/>
    </source>
</evidence>
<evidence type="ECO:0000256" key="2">
    <source>
        <dbReference type="SAM" id="MobiDB-lite"/>
    </source>
</evidence>
<evidence type="ECO:0000305" key="3"/>
<comment type="function">
    <text evidence="1">Cell division inhibitor that blocks the formation of polar Z ring septums. Rapidly oscillates between the poles of the cell to destabilize FtsZ filaments that have formed before they mature into polar Z rings. Prevents FtsZ polymerization.</text>
</comment>
<comment type="subunit">
    <text evidence="1">Interacts with MinD and FtsZ.</text>
</comment>
<comment type="similarity">
    <text evidence="1">Belongs to the MinC family.</text>
</comment>
<comment type="sequence caution" evidence="3">
    <conflict type="erroneous initiation">
        <sequence resource="EMBL-CDS" id="AAN33521"/>
    </conflict>
</comment>
<comment type="sequence caution" evidence="3">
    <conflict type="erroneous initiation">
        <sequence resource="EMBL-CDS" id="AEM19800"/>
    </conflict>
    <text>Extended N-terminus.</text>
</comment>
<keyword id="KW-0131">Cell cycle</keyword>
<keyword id="KW-0132">Cell division</keyword>
<keyword id="KW-0717">Septation</keyword>
<sequence length="248" mass="26545">MNQVLTETRPIRLKGRSFLAMVLSPELPLDGWLELLDDLARRSSGFFLGRPVVLDMENLAIERAQLVYLLQALNDRGVWIMGVEGARPSLLGPGMPPAMRGGQPAADFEAPAGEPQANPGAPEPQISQAVRAPGHAVHAMPSMVITEPVRSGQSVYFPEGDVTIVGSVASGAEVVAGGSIHIYGTLRGRALAGTAGNTSARIFCRKLEAELVAIDGLYKTAEDLEPRFRGQAVQLWLDGDYMMIDTLS</sequence>
<feature type="chain" id="PRO_0000189023" description="Probable septum site-determining protein MinC">
    <location>
        <begin position="1"/>
        <end position="248"/>
    </location>
</feature>
<feature type="region of interest" description="Disordered" evidence="2">
    <location>
        <begin position="94"/>
        <end position="126"/>
    </location>
</feature>
<protein>
    <recommendedName>
        <fullName evidence="1">Probable septum site-determining protein MinC</fullName>
    </recommendedName>
</protein>
<gene>
    <name evidence="1" type="primary">minC</name>
    <name type="ordered locus">BRA0321</name>
    <name type="ordered locus">BS1330_II0318</name>
</gene>
<organism>
    <name type="scientific">Brucella suis biovar 1 (strain 1330)</name>
    <dbReference type="NCBI Taxonomy" id="204722"/>
    <lineage>
        <taxon>Bacteria</taxon>
        <taxon>Pseudomonadati</taxon>
        <taxon>Pseudomonadota</taxon>
        <taxon>Alphaproteobacteria</taxon>
        <taxon>Hyphomicrobiales</taxon>
        <taxon>Brucellaceae</taxon>
        <taxon>Brucella/Ochrobactrum group</taxon>
        <taxon>Brucella</taxon>
    </lineage>
</organism>
<proteinExistence type="inferred from homology"/>
<dbReference type="EMBL" id="AE014292">
    <property type="protein sequence ID" value="AAN33521.1"/>
    <property type="status" value="ALT_INIT"/>
    <property type="molecule type" value="Genomic_DNA"/>
</dbReference>
<dbReference type="EMBL" id="CP002998">
    <property type="protein sequence ID" value="AEM19800.1"/>
    <property type="status" value="ALT_INIT"/>
    <property type="molecule type" value="Genomic_DNA"/>
</dbReference>
<dbReference type="RefSeq" id="WP_004692436.1">
    <property type="nucleotide sequence ID" value="NZ_KN046805.1"/>
</dbReference>
<dbReference type="SMR" id="Q8FWX2"/>
<dbReference type="GeneID" id="55592020"/>
<dbReference type="KEGG" id="bms:BRA0321"/>
<dbReference type="KEGG" id="bsi:BS1330_II0318"/>
<dbReference type="PATRIC" id="fig|204722.21.peg.187"/>
<dbReference type="HOGENOM" id="CLU_067812_1_0_5"/>
<dbReference type="Proteomes" id="UP000007104">
    <property type="component" value="Chromosome II"/>
</dbReference>
<dbReference type="GO" id="GO:0000902">
    <property type="term" value="P:cell morphogenesis"/>
    <property type="evidence" value="ECO:0007669"/>
    <property type="project" value="InterPro"/>
</dbReference>
<dbReference type="GO" id="GO:0000917">
    <property type="term" value="P:division septum assembly"/>
    <property type="evidence" value="ECO:0007669"/>
    <property type="project" value="UniProtKB-KW"/>
</dbReference>
<dbReference type="GO" id="GO:1901891">
    <property type="term" value="P:regulation of cell septum assembly"/>
    <property type="evidence" value="ECO:0007669"/>
    <property type="project" value="InterPro"/>
</dbReference>
<dbReference type="Gene3D" id="2.160.20.70">
    <property type="match status" value="1"/>
</dbReference>
<dbReference type="Gene3D" id="3.30.70.260">
    <property type="match status" value="1"/>
</dbReference>
<dbReference type="HAMAP" id="MF_00267">
    <property type="entry name" value="MinC"/>
    <property type="match status" value="1"/>
</dbReference>
<dbReference type="InterPro" id="IPR016098">
    <property type="entry name" value="CAP/MinC_C"/>
</dbReference>
<dbReference type="InterPro" id="IPR013033">
    <property type="entry name" value="MinC"/>
</dbReference>
<dbReference type="InterPro" id="IPR036145">
    <property type="entry name" value="MinC_C_sf"/>
</dbReference>
<dbReference type="InterPro" id="IPR005526">
    <property type="entry name" value="Septum_form_inhib_MinC_C"/>
</dbReference>
<dbReference type="NCBIfam" id="TIGR01222">
    <property type="entry name" value="minC"/>
    <property type="match status" value="1"/>
</dbReference>
<dbReference type="PANTHER" id="PTHR34108">
    <property type="entry name" value="SEPTUM SITE-DETERMINING PROTEIN MINC"/>
    <property type="match status" value="1"/>
</dbReference>
<dbReference type="PANTHER" id="PTHR34108:SF1">
    <property type="entry name" value="SEPTUM SITE-DETERMINING PROTEIN MINC"/>
    <property type="match status" value="1"/>
</dbReference>
<dbReference type="Pfam" id="PF03775">
    <property type="entry name" value="MinC_C"/>
    <property type="match status" value="1"/>
</dbReference>
<dbReference type="SUPFAM" id="SSF63848">
    <property type="entry name" value="Cell-division inhibitor MinC, C-terminal domain"/>
    <property type="match status" value="1"/>
</dbReference>